<accession>B4S1W8</accession>
<accession>F2GCF9</accession>
<dbReference type="EC" id="2.3.1.15" evidence="1"/>
<dbReference type="EMBL" id="CP001103">
    <property type="status" value="NOT_ANNOTATED_CDS"/>
    <property type="molecule type" value="Genomic_DNA"/>
</dbReference>
<dbReference type="SMR" id="B4S1W8"/>
<dbReference type="UniPathway" id="UPA00557">
    <property type="reaction ID" value="UER00612"/>
</dbReference>
<dbReference type="Proteomes" id="UP000001870">
    <property type="component" value="Chromosome"/>
</dbReference>
<dbReference type="GO" id="GO:0005886">
    <property type="term" value="C:plasma membrane"/>
    <property type="evidence" value="ECO:0007669"/>
    <property type="project" value="UniProtKB-SubCell"/>
</dbReference>
<dbReference type="GO" id="GO:0004366">
    <property type="term" value="F:glycerol-3-phosphate O-acyltransferase activity"/>
    <property type="evidence" value="ECO:0007669"/>
    <property type="project" value="UniProtKB-UniRule"/>
</dbReference>
<dbReference type="GO" id="GO:0016024">
    <property type="term" value="P:CDP-diacylglycerol biosynthetic process"/>
    <property type="evidence" value="ECO:0007669"/>
    <property type="project" value="UniProtKB-UniRule"/>
</dbReference>
<dbReference type="GO" id="GO:0006631">
    <property type="term" value="P:fatty acid metabolic process"/>
    <property type="evidence" value="ECO:0007669"/>
    <property type="project" value="TreeGrafter"/>
</dbReference>
<dbReference type="CDD" id="cd07993">
    <property type="entry name" value="LPLAT_DHAPAT-like"/>
    <property type="match status" value="1"/>
</dbReference>
<dbReference type="HAMAP" id="MF_00393">
    <property type="entry name" value="Glyc3P_acyltrans"/>
    <property type="match status" value="1"/>
</dbReference>
<dbReference type="InterPro" id="IPR022284">
    <property type="entry name" value="GPAT/DHAPAT"/>
</dbReference>
<dbReference type="InterPro" id="IPR045520">
    <property type="entry name" value="GPAT/DHAPAT_C"/>
</dbReference>
<dbReference type="InterPro" id="IPR041728">
    <property type="entry name" value="GPAT/DHAPAT_LPLAT"/>
</dbReference>
<dbReference type="InterPro" id="IPR028354">
    <property type="entry name" value="GPAT_PlsB"/>
</dbReference>
<dbReference type="InterPro" id="IPR002123">
    <property type="entry name" value="Plipid/glycerol_acylTrfase"/>
</dbReference>
<dbReference type="NCBIfam" id="TIGR03703">
    <property type="entry name" value="plsB"/>
    <property type="match status" value="1"/>
</dbReference>
<dbReference type="NCBIfam" id="NF003441">
    <property type="entry name" value="PRK04974.1"/>
    <property type="match status" value="1"/>
</dbReference>
<dbReference type="PANTHER" id="PTHR12563:SF17">
    <property type="entry name" value="DIHYDROXYACETONE PHOSPHATE ACYLTRANSFERASE"/>
    <property type="match status" value="1"/>
</dbReference>
<dbReference type="PANTHER" id="PTHR12563">
    <property type="entry name" value="GLYCEROL-3-PHOSPHATE ACYLTRANSFERASE"/>
    <property type="match status" value="1"/>
</dbReference>
<dbReference type="Pfam" id="PF01553">
    <property type="entry name" value="Acyltransferase"/>
    <property type="match status" value="1"/>
</dbReference>
<dbReference type="Pfam" id="PF19277">
    <property type="entry name" value="GPAT_C"/>
    <property type="match status" value="1"/>
</dbReference>
<dbReference type="PIRSF" id="PIRSF500064">
    <property type="entry name" value="GPAT"/>
    <property type="match status" value="1"/>
</dbReference>
<dbReference type="PIRSF" id="PIRSF000437">
    <property type="entry name" value="GPAT_DHAPAT"/>
    <property type="match status" value="1"/>
</dbReference>
<dbReference type="SMART" id="SM00563">
    <property type="entry name" value="PlsC"/>
    <property type="match status" value="1"/>
</dbReference>
<dbReference type="SUPFAM" id="SSF69593">
    <property type="entry name" value="Glycerol-3-phosphate (1)-acyltransferase"/>
    <property type="match status" value="1"/>
</dbReference>
<keyword id="KW-0012">Acyltransferase</keyword>
<keyword id="KW-0997">Cell inner membrane</keyword>
<keyword id="KW-1003">Cell membrane</keyword>
<keyword id="KW-0444">Lipid biosynthesis</keyword>
<keyword id="KW-0443">Lipid metabolism</keyword>
<keyword id="KW-0472">Membrane</keyword>
<keyword id="KW-0594">Phospholipid biosynthesis</keyword>
<keyword id="KW-1208">Phospholipid metabolism</keyword>
<keyword id="KW-0808">Transferase</keyword>
<comment type="catalytic activity">
    <reaction evidence="1">
        <text>sn-glycerol 3-phosphate + an acyl-CoA = a 1-acyl-sn-glycero-3-phosphate + CoA</text>
        <dbReference type="Rhea" id="RHEA:15325"/>
        <dbReference type="ChEBI" id="CHEBI:57287"/>
        <dbReference type="ChEBI" id="CHEBI:57597"/>
        <dbReference type="ChEBI" id="CHEBI:57970"/>
        <dbReference type="ChEBI" id="CHEBI:58342"/>
        <dbReference type="EC" id="2.3.1.15"/>
    </reaction>
</comment>
<comment type="pathway">
    <text evidence="1">Phospholipid metabolism; CDP-diacylglycerol biosynthesis; CDP-diacylglycerol from sn-glycerol 3-phosphate: step 1/3.</text>
</comment>
<comment type="subcellular location">
    <subcellularLocation>
        <location evidence="1">Cell inner membrane</location>
        <topology evidence="1">Peripheral membrane protein</topology>
        <orientation evidence="1">Cytoplasmic side</orientation>
    </subcellularLocation>
</comment>
<comment type="domain">
    <text evidence="1">The HXXXXD motif is essential for acyltransferase activity and may constitute the binding site for the phosphate moiety of the glycerol-3-phosphate.</text>
</comment>
<comment type="similarity">
    <text evidence="1">Belongs to the GPAT/DAPAT family.</text>
</comment>
<comment type="sequence caution" evidence="2">
    <conflict type="frameshift">
        <sequence resource="EMBL" id="CP001103"/>
    </conflict>
</comment>
<name>PLSB_ALTMD</name>
<feature type="chain" id="PRO_1000123074" description="Glycerol-3-phosphate acyltransferase">
    <location>
        <begin position="1"/>
        <end position="818"/>
    </location>
</feature>
<feature type="short sequence motif" description="HXXXXD motif">
    <location>
        <begin position="308"/>
        <end position="313"/>
    </location>
</feature>
<organism>
    <name type="scientific">Alteromonas mediterranea (strain DSM 17117 / CIP 110805 / LMG 28347 / Deep ecotype)</name>
    <dbReference type="NCBI Taxonomy" id="1774373"/>
    <lineage>
        <taxon>Bacteria</taxon>
        <taxon>Pseudomonadati</taxon>
        <taxon>Pseudomonadota</taxon>
        <taxon>Gammaproteobacteria</taxon>
        <taxon>Alteromonadales</taxon>
        <taxon>Alteromonadaceae</taxon>
        <taxon>Alteromonas/Salinimonas group</taxon>
        <taxon>Alteromonas</taxon>
    </lineage>
</organism>
<evidence type="ECO:0000255" key="1">
    <source>
        <dbReference type="HAMAP-Rule" id="MF_00393"/>
    </source>
</evidence>
<evidence type="ECO:0000305" key="2"/>
<proteinExistence type="inferred from homology"/>
<sequence>MSWMRKALLSVFHYPVKLLVKAHSIPVNVETELGIDKSKPIVYLLPTNSVTDQLSLRMSTQALDLPSPTKTLTLAGREYSSTLFLRKTQPLFRSSAKDTGIEEVFTDLFHLHRDHENLDLQVVPVYVTWGRAPGRGNPGLSDLIADKAAPSWLRKLFIVLFLGRDNFINYSKAVSARAMSNQHGSDQSIAHKLVRVASTHFQRKRQSMTGPTLLERQELNNSVLGSDAVRRAIAEESRSKKVSHDKAKACAQSYITEIAADYREGLIRFGDRLLTRIWNKIYNGISVGHAERIRELAANGHEIIYVPCHRSHMDYLLLTYVIYHEGMVTPHIAAGINLNFWPVGKMFRRGGAFFLRRSFAGNKLYTAVFREYLELLFNKGYSVKYYPEGGRSRTGRLIPPKTGMLAITIQAMLKGVNRPVSIVPVYIGYENVMEVKSYLNELKGSKKKKESNLQVFSAIRKLKNYGHGYVNFGEPIALNQFLESHVPNWRDCKDAEPEKKPAWLTPAVNELANNVMTRINRAAALNGMALTSLCLLSSKTQTMSEAELKQSIGDFMDLFKAVPFSDDATIPDSTAEALLRDTLKLGRFDIKEDDYGRLISPQPKSAVYLTYYRNNILHLFAIPGLVMASVFAKKGTTKNDILQLIAALYPLLQKELFLHLTQDEALAHTDALVTALLNNGLLRQKDKELLPPDAHCKQFHSAWLLSRCMQETLQRYAVVLTILDKEKVISRGALERESKQVAERLSALYGLSSPEFYDKNVLSSFIGALKENHWLDSEKDGSLKYSEECEALRQDVMALIWPEMMQHLENVALNGQTN</sequence>
<protein>
    <recommendedName>
        <fullName evidence="1">Glycerol-3-phosphate acyltransferase</fullName>
        <shortName evidence="1">GPAT</shortName>
        <ecNumber evidence="1">2.3.1.15</ecNumber>
    </recommendedName>
</protein>
<reference key="1">
    <citation type="journal article" date="2008" name="ISME J.">
        <title>Comparative genomics of two ecotypes of the marine planktonic copiotroph Alteromonas macleodii suggests alternative lifestyles associated with different kinds of particulate organic matter.</title>
        <authorList>
            <person name="Ivars-Martinez E."/>
            <person name="Martin-Cuadrado A.-B."/>
            <person name="D'Auria G."/>
            <person name="Mira A."/>
            <person name="Ferriera S."/>
            <person name="Johnson J."/>
            <person name="Friedman R."/>
            <person name="Rodriguez-Valera F."/>
        </authorList>
    </citation>
    <scope>NUCLEOTIDE SEQUENCE [LARGE SCALE GENOMIC DNA]</scope>
    <source>
        <strain>DSM 17117 / CIP 110805 / LMG 28347 / Deep ecotype</strain>
    </source>
</reference>
<gene>
    <name evidence="1" type="primary">plsB</name>
    <name type="ordered locus">MADE_1020115</name>
</gene>